<sequence>MPKREDIKKVLLIGSGPITIGQAAEFDFSGSQACRSLKEEGVQVVLVNSNPATIMTDPEMADSVYIEPLDARIIEKIIEKERPDGIIAGIGGQTGLNITSELAEMGVFEKYGVQILGTPVEAIKNTEDRELFKETMLSIGEKVPLSRAVHSLKEAEEVVEELGLPLIIRPAYTLGGAGGGIARTKEELLEITERGLRRSRINQVLIEESVLGWAEVEYEVMRDANDTCIVICNMENIDPMGVHTGESAVVAPSQTLSDEEHQMLRSASIKIIRALKIEGGCNIQYALKEGDYRIVEVNPRVSRSSALASKATGYPIARVTAKIAIGMTLDEIVNSVTKSTPASFEPALDYVITKIPRWPFDKFTTADKTLTTAMKSTGEIMAIGRTIEESLLKAFKSLDIDNQLGIKRWDEPEIKTLLKTPTSERLFVIFHALERGMSIKEIAELTSINPFFISKMKKIVEMEKCIRTEELTPEFLREVKRMGFPDSRLAELTGKTREQISDFRHEEGILATFKMVDTCAAEFEAATPYYYSTYEDTCETNSTDKKKILILGAGPIRIGQGIEFDYCTVHAVTALREEGIETHIINNNPETVSTDFDTSDKLFFEPLTMEYVMNVIERERPDGVLVQFGGQTSVNLALPLKKELKRRTDLNTVILGTDPEDMDLAEDREKFYLLMQELGIPQPEGGYATSQQEAIEVAKRIGFPVLVRPSYVLGGRAMEIVYDEIDLERYMKEAVRVSPEHPILIDDFLEAACEIDVDAVCDQIDVLIGAIMEHIEEAGVHSGDSACVIPPQSLSKEVLDQVRDYTRKIALGLRVKGLINIQMAEKGGKVFVLEANPRSSRTIPFVSKAVGIPLAKIAAKVIAGHSLKDLGYTDEPKPKHVSIKEVLLPFDKLPGADPVLGPEMKSTGEVMGVDYDFGRAYYKAELAADNLLPLTGKVFLSIRNADKPELVEAARKLQAAGLELMGTRGTVNYLAQHGIFMDTVKKVHDGSPNVIDMMRRDEVDLIINTPTSKMSRKDGYRIRRAAVDFKVPYITTIQAAVAAADAIETMKKGQDLTIKSINEYHKEMEQKEE</sequence>
<keyword id="KW-0028">Amino-acid biosynthesis</keyword>
<keyword id="KW-0055">Arginine biosynthesis</keyword>
<keyword id="KW-0067">ATP-binding</keyword>
<keyword id="KW-0436">Ligase</keyword>
<keyword id="KW-0460">Magnesium</keyword>
<keyword id="KW-0464">Manganese</keyword>
<keyword id="KW-0479">Metal-binding</keyword>
<keyword id="KW-0547">Nucleotide-binding</keyword>
<keyword id="KW-0665">Pyrimidine biosynthesis</keyword>
<keyword id="KW-0677">Repeat</keyword>
<proteinExistence type="inferred from homology"/>
<accession>P58944</accession>
<gene>
    <name evidence="1" type="primary">carB</name>
    <name type="ordered locus">MM_0038</name>
</gene>
<evidence type="ECO:0000255" key="1">
    <source>
        <dbReference type="HAMAP-Rule" id="MF_01210"/>
    </source>
</evidence>
<comment type="function">
    <text evidence="1">Large subunit of the glutamine-dependent carbamoyl phosphate synthetase (CPSase). CPSase catalyzes the formation of carbamoyl phosphate from the ammonia moiety of glutamine, carbonate, and phosphate donated by ATP, constituting the first step of 2 biosynthetic pathways, one leading to arginine and/or urea and the other to pyrimidine nucleotides. The large subunit (synthetase) binds the substrates ammonia (free or transferred from glutamine from the small subunit), hydrogencarbonate and ATP and carries out an ATP-coupled ligase reaction, activating hydrogencarbonate by forming carboxy phosphate which reacts with ammonia to form carbamoyl phosphate.</text>
</comment>
<comment type="catalytic activity">
    <reaction evidence="1">
        <text>hydrogencarbonate + L-glutamine + 2 ATP + H2O = carbamoyl phosphate + L-glutamate + 2 ADP + phosphate + 2 H(+)</text>
        <dbReference type="Rhea" id="RHEA:18633"/>
        <dbReference type="ChEBI" id="CHEBI:15377"/>
        <dbReference type="ChEBI" id="CHEBI:15378"/>
        <dbReference type="ChEBI" id="CHEBI:17544"/>
        <dbReference type="ChEBI" id="CHEBI:29985"/>
        <dbReference type="ChEBI" id="CHEBI:30616"/>
        <dbReference type="ChEBI" id="CHEBI:43474"/>
        <dbReference type="ChEBI" id="CHEBI:58228"/>
        <dbReference type="ChEBI" id="CHEBI:58359"/>
        <dbReference type="ChEBI" id="CHEBI:456216"/>
        <dbReference type="EC" id="6.3.5.5"/>
    </reaction>
</comment>
<comment type="catalytic activity">
    <molecule>Carbamoyl phosphate synthase large chain</molecule>
    <reaction evidence="1">
        <text>hydrogencarbonate + NH4(+) + 2 ATP = carbamoyl phosphate + 2 ADP + phosphate + 2 H(+)</text>
        <dbReference type="Rhea" id="RHEA:18029"/>
        <dbReference type="ChEBI" id="CHEBI:15378"/>
        <dbReference type="ChEBI" id="CHEBI:17544"/>
        <dbReference type="ChEBI" id="CHEBI:28938"/>
        <dbReference type="ChEBI" id="CHEBI:30616"/>
        <dbReference type="ChEBI" id="CHEBI:43474"/>
        <dbReference type="ChEBI" id="CHEBI:58228"/>
        <dbReference type="ChEBI" id="CHEBI:456216"/>
        <dbReference type="EC" id="6.3.4.16"/>
    </reaction>
</comment>
<comment type="cofactor">
    <cofactor evidence="1">
        <name>Mg(2+)</name>
        <dbReference type="ChEBI" id="CHEBI:18420"/>
    </cofactor>
    <cofactor evidence="1">
        <name>Mn(2+)</name>
        <dbReference type="ChEBI" id="CHEBI:29035"/>
    </cofactor>
    <text evidence="1">Binds 4 Mg(2+) or Mn(2+) ions per subunit.</text>
</comment>
<comment type="pathway">
    <text evidence="1">Amino-acid biosynthesis; L-arginine biosynthesis; carbamoyl phosphate from bicarbonate: step 1/1.</text>
</comment>
<comment type="pathway">
    <text evidence="1">Pyrimidine metabolism; UMP biosynthesis via de novo pathway; (S)-dihydroorotate from bicarbonate: step 1/3.</text>
</comment>
<comment type="subunit">
    <text evidence="1">Composed of two chains; the small (or glutamine) chain promotes the hydrolysis of glutamine to ammonia, which is used by the large (or ammonia) chain to synthesize carbamoyl phosphate. Tetramer of heterodimers (alpha,beta)4.</text>
</comment>
<comment type="domain">
    <text evidence="1">The large subunit is composed of 2 ATP-grasp domains that are involved in binding the 2 ATP molecules needed for carbamoyl phosphate synthesis. The N-terminal ATP-grasp domain (referred to as the carboxyphosphate synthetic component) catalyzes the ATP-dependent phosphorylation of hydrogencarbonate to carboxyphosphate and the subsequent nucleophilic attack by ammonia to form a carbamate intermediate. The C-terminal ATP-grasp domain (referred to as the carbamoyl phosphate synthetic component) then catalyzes the phosphorylation of carbamate with the second ATP to form the end product carbamoyl phosphate. The reactive and unstable enzyme intermediates are sequentially channeled from one active site to the next through the interior of the protein over a distance of at least 96 A.</text>
</comment>
<comment type="similarity">
    <text evidence="1">Belongs to the CarB family.</text>
</comment>
<name>CARB_METMA</name>
<organism>
    <name type="scientific">Methanosarcina mazei (strain ATCC BAA-159 / DSM 3647 / Goe1 / Go1 / JCM 11833 / OCM 88)</name>
    <name type="common">Methanosarcina frisia</name>
    <dbReference type="NCBI Taxonomy" id="192952"/>
    <lineage>
        <taxon>Archaea</taxon>
        <taxon>Methanobacteriati</taxon>
        <taxon>Methanobacteriota</taxon>
        <taxon>Stenosarchaea group</taxon>
        <taxon>Methanomicrobia</taxon>
        <taxon>Methanosarcinales</taxon>
        <taxon>Methanosarcinaceae</taxon>
        <taxon>Methanosarcina</taxon>
    </lineage>
</organism>
<reference key="1">
    <citation type="journal article" date="2002" name="J. Mol. Microbiol. Biotechnol.">
        <title>The genome of Methanosarcina mazei: evidence for lateral gene transfer between Bacteria and Archaea.</title>
        <authorList>
            <person name="Deppenmeier U."/>
            <person name="Johann A."/>
            <person name="Hartsch T."/>
            <person name="Merkl R."/>
            <person name="Schmitz R.A."/>
            <person name="Martinez-Arias R."/>
            <person name="Henne A."/>
            <person name="Wiezer A."/>
            <person name="Baeumer S."/>
            <person name="Jacobi C."/>
            <person name="Brueggemann H."/>
            <person name="Lienard T."/>
            <person name="Christmann A."/>
            <person name="Boemecke M."/>
            <person name="Steckel S."/>
            <person name="Bhattacharyya A."/>
            <person name="Lykidis A."/>
            <person name="Overbeek R."/>
            <person name="Klenk H.-P."/>
            <person name="Gunsalus R.P."/>
            <person name="Fritz H.-J."/>
            <person name="Gottschalk G."/>
        </authorList>
    </citation>
    <scope>NUCLEOTIDE SEQUENCE [LARGE SCALE GENOMIC DNA]</scope>
    <source>
        <strain>ATCC BAA-159 / DSM 3647 / Goe1 / Go1 / JCM 11833 / OCM 88</strain>
    </source>
</reference>
<feature type="chain" id="PRO_0000145079" description="Carbamoyl phosphate synthase large chain">
    <location>
        <begin position="1"/>
        <end position="1073"/>
    </location>
</feature>
<feature type="domain" description="ATP-grasp 1" evidence="1">
    <location>
        <begin position="133"/>
        <end position="325"/>
    </location>
</feature>
<feature type="domain" description="ATP-grasp 2" evidence="1">
    <location>
        <begin position="672"/>
        <end position="863"/>
    </location>
</feature>
<feature type="domain" description="MGS-like" evidence="1">
    <location>
        <begin position="930"/>
        <end position="1071"/>
    </location>
</feature>
<feature type="region of interest" description="Carboxyphosphate synthetic domain" evidence="1">
    <location>
        <begin position="1"/>
        <end position="399"/>
    </location>
</feature>
<feature type="region of interest" description="Oligomerization domain" evidence="1">
    <location>
        <begin position="400"/>
        <end position="540"/>
    </location>
</feature>
<feature type="region of interest" description="Carbamoyl phosphate synthetic domain" evidence="1">
    <location>
        <begin position="541"/>
        <end position="931"/>
    </location>
</feature>
<feature type="region of interest" description="Allosteric domain" evidence="1">
    <location>
        <begin position="932"/>
        <end position="1073"/>
    </location>
</feature>
<feature type="binding site" evidence="1">
    <location>
        <position position="129"/>
    </location>
    <ligand>
        <name>ATP</name>
        <dbReference type="ChEBI" id="CHEBI:30616"/>
        <label>1</label>
    </ligand>
</feature>
<feature type="binding site" evidence="1">
    <location>
        <position position="169"/>
    </location>
    <ligand>
        <name>ATP</name>
        <dbReference type="ChEBI" id="CHEBI:30616"/>
        <label>1</label>
    </ligand>
</feature>
<feature type="binding site" evidence="1">
    <location>
        <position position="175"/>
    </location>
    <ligand>
        <name>ATP</name>
        <dbReference type="ChEBI" id="CHEBI:30616"/>
        <label>1</label>
    </ligand>
</feature>
<feature type="binding site" evidence="1">
    <location>
        <position position="176"/>
    </location>
    <ligand>
        <name>ATP</name>
        <dbReference type="ChEBI" id="CHEBI:30616"/>
        <label>1</label>
    </ligand>
</feature>
<feature type="binding site" evidence="1">
    <location>
        <position position="208"/>
    </location>
    <ligand>
        <name>ATP</name>
        <dbReference type="ChEBI" id="CHEBI:30616"/>
        <label>1</label>
    </ligand>
</feature>
<feature type="binding site" evidence="1">
    <location>
        <position position="210"/>
    </location>
    <ligand>
        <name>ATP</name>
        <dbReference type="ChEBI" id="CHEBI:30616"/>
        <label>1</label>
    </ligand>
</feature>
<feature type="binding site" evidence="1">
    <location>
        <position position="215"/>
    </location>
    <ligand>
        <name>ATP</name>
        <dbReference type="ChEBI" id="CHEBI:30616"/>
        <label>1</label>
    </ligand>
</feature>
<feature type="binding site" evidence="1">
    <location>
        <position position="241"/>
    </location>
    <ligand>
        <name>ATP</name>
        <dbReference type="ChEBI" id="CHEBI:30616"/>
        <label>1</label>
    </ligand>
</feature>
<feature type="binding site" evidence="1">
    <location>
        <position position="242"/>
    </location>
    <ligand>
        <name>ATP</name>
        <dbReference type="ChEBI" id="CHEBI:30616"/>
        <label>1</label>
    </ligand>
</feature>
<feature type="binding site" evidence="1">
    <location>
        <position position="243"/>
    </location>
    <ligand>
        <name>ATP</name>
        <dbReference type="ChEBI" id="CHEBI:30616"/>
        <label>1</label>
    </ligand>
</feature>
<feature type="binding site" evidence="1">
    <location>
        <position position="284"/>
    </location>
    <ligand>
        <name>ATP</name>
        <dbReference type="ChEBI" id="CHEBI:30616"/>
        <label>1</label>
    </ligand>
</feature>
<feature type="binding site" evidence="1">
    <location>
        <position position="284"/>
    </location>
    <ligand>
        <name>Mg(2+)</name>
        <dbReference type="ChEBI" id="CHEBI:18420"/>
        <label>1</label>
    </ligand>
</feature>
<feature type="binding site" evidence="1">
    <location>
        <position position="284"/>
    </location>
    <ligand>
        <name>Mn(2+)</name>
        <dbReference type="ChEBI" id="CHEBI:29035"/>
        <label>1</label>
    </ligand>
</feature>
<feature type="binding site" evidence="1">
    <location>
        <position position="296"/>
    </location>
    <ligand>
        <name>ATP</name>
        <dbReference type="ChEBI" id="CHEBI:30616"/>
        <label>1</label>
    </ligand>
</feature>
<feature type="binding site" evidence="1">
    <location>
        <position position="296"/>
    </location>
    <ligand>
        <name>Mg(2+)</name>
        <dbReference type="ChEBI" id="CHEBI:18420"/>
        <label>1</label>
    </ligand>
</feature>
<feature type="binding site" evidence="1">
    <location>
        <position position="296"/>
    </location>
    <ligand>
        <name>Mg(2+)</name>
        <dbReference type="ChEBI" id="CHEBI:18420"/>
        <label>2</label>
    </ligand>
</feature>
<feature type="binding site" evidence="1">
    <location>
        <position position="296"/>
    </location>
    <ligand>
        <name>Mn(2+)</name>
        <dbReference type="ChEBI" id="CHEBI:29035"/>
        <label>1</label>
    </ligand>
</feature>
<feature type="binding site" evidence="1">
    <location>
        <position position="296"/>
    </location>
    <ligand>
        <name>Mn(2+)</name>
        <dbReference type="ChEBI" id="CHEBI:29035"/>
        <label>2</label>
    </ligand>
</feature>
<feature type="binding site" evidence="1">
    <location>
        <position position="298"/>
    </location>
    <ligand>
        <name>Mg(2+)</name>
        <dbReference type="ChEBI" id="CHEBI:18420"/>
        <label>2</label>
    </ligand>
</feature>
<feature type="binding site" evidence="1">
    <location>
        <position position="298"/>
    </location>
    <ligand>
        <name>Mn(2+)</name>
        <dbReference type="ChEBI" id="CHEBI:29035"/>
        <label>2</label>
    </ligand>
</feature>
<feature type="binding site" evidence="1">
    <location>
        <position position="708"/>
    </location>
    <ligand>
        <name>ATP</name>
        <dbReference type="ChEBI" id="CHEBI:30616"/>
        <label>2</label>
    </ligand>
</feature>
<feature type="binding site" evidence="1">
    <location>
        <position position="747"/>
    </location>
    <ligand>
        <name>ATP</name>
        <dbReference type="ChEBI" id="CHEBI:30616"/>
        <label>2</label>
    </ligand>
</feature>
<feature type="binding site" evidence="1">
    <location>
        <position position="749"/>
    </location>
    <ligand>
        <name>ATP</name>
        <dbReference type="ChEBI" id="CHEBI:30616"/>
        <label>2</label>
    </ligand>
</feature>
<feature type="binding site" evidence="1">
    <location>
        <position position="754"/>
    </location>
    <ligand>
        <name>ATP</name>
        <dbReference type="ChEBI" id="CHEBI:30616"/>
        <label>2</label>
    </ligand>
</feature>
<feature type="binding site" evidence="1">
    <location>
        <position position="779"/>
    </location>
    <ligand>
        <name>ATP</name>
        <dbReference type="ChEBI" id="CHEBI:30616"/>
        <label>2</label>
    </ligand>
</feature>
<feature type="binding site" evidence="1">
    <location>
        <position position="780"/>
    </location>
    <ligand>
        <name>ATP</name>
        <dbReference type="ChEBI" id="CHEBI:30616"/>
        <label>2</label>
    </ligand>
</feature>
<feature type="binding site" evidence="1">
    <location>
        <position position="781"/>
    </location>
    <ligand>
        <name>ATP</name>
        <dbReference type="ChEBI" id="CHEBI:30616"/>
        <label>2</label>
    </ligand>
</feature>
<feature type="binding site" evidence="1">
    <location>
        <position position="782"/>
    </location>
    <ligand>
        <name>ATP</name>
        <dbReference type="ChEBI" id="CHEBI:30616"/>
        <label>2</label>
    </ligand>
</feature>
<feature type="binding site" evidence="1">
    <location>
        <position position="822"/>
    </location>
    <ligand>
        <name>ATP</name>
        <dbReference type="ChEBI" id="CHEBI:30616"/>
        <label>2</label>
    </ligand>
</feature>
<feature type="binding site" evidence="1">
    <location>
        <position position="822"/>
    </location>
    <ligand>
        <name>Mg(2+)</name>
        <dbReference type="ChEBI" id="CHEBI:18420"/>
        <label>3</label>
    </ligand>
</feature>
<feature type="binding site" evidence="1">
    <location>
        <position position="822"/>
    </location>
    <ligand>
        <name>Mn(2+)</name>
        <dbReference type="ChEBI" id="CHEBI:29035"/>
        <label>3</label>
    </ligand>
</feature>
<feature type="binding site" evidence="1">
    <location>
        <position position="834"/>
    </location>
    <ligand>
        <name>ATP</name>
        <dbReference type="ChEBI" id="CHEBI:30616"/>
        <label>2</label>
    </ligand>
</feature>
<feature type="binding site" evidence="1">
    <location>
        <position position="834"/>
    </location>
    <ligand>
        <name>Mg(2+)</name>
        <dbReference type="ChEBI" id="CHEBI:18420"/>
        <label>3</label>
    </ligand>
</feature>
<feature type="binding site" evidence="1">
    <location>
        <position position="834"/>
    </location>
    <ligand>
        <name>Mg(2+)</name>
        <dbReference type="ChEBI" id="CHEBI:18420"/>
        <label>4</label>
    </ligand>
</feature>
<feature type="binding site" evidence="1">
    <location>
        <position position="834"/>
    </location>
    <ligand>
        <name>Mn(2+)</name>
        <dbReference type="ChEBI" id="CHEBI:29035"/>
        <label>3</label>
    </ligand>
</feature>
<feature type="binding site" evidence="1">
    <location>
        <position position="834"/>
    </location>
    <ligand>
        <name>Mn(2+)</name>
        <dbReference type="ChEBI" id="CHEBI:29035"/>
        <label>4</label>
    </ligand>
</feature>
<feature type="binding site" evidence="1">
    <location>
        <position position="836"/>
    </location>
    <ligand>
        <name>Mg(2+)</name>
        <dbReference type="ChEBI" id="CHEBI:18420"/>
        <label>4</label>
    </ligand>
</feature>
<feature type="binding site" evidence="1">
    <location>
        <position position="836"/>
    </location>
    <ligand>
        <name>Mn(2+)</name>
        <dbReference type="ChEBI" id="CHEBI:29035"/>
        <label>4</label>
    </ligand>
</feature>
<protein>
    <recommendedName>
        <fullName evidence="1">Carbamoyl phosphate synthase large chain</fullName>
        <ecNumber evidence="1">6.3.4.16</ecNumber>
        <ecNumber evidence="1">6.3.5.5</ecNumber>
    </recommendedName>
    <alternativeName>
        <fullName evidence="1">Carbamoyl phosphate synthetase ammonia chain</fullName>
    </alternativeName>
</protein>
<dbReference type="EC" id="6.3.4.16" evidence="1"/>
<dbReference type="EC" id="6.3.5.5" evidence="1"/>
<dbReference type="EMBL" id="AE008384">
    <property type="protein sequence ID" value="AAM29734.1"/>
    <property type="molecule type" value="Genomic_DNA"/>
</dbReference>
<dbReference type="RefSeq" id="WP_011031992.1">
    <property type="nucleotide sequence ID" value="NC_003901.1"/>
</dbReference>
<dbReference type="SMR" id="P58944"/>
<dbReference type="GeneID" id="82159004"/>
<dbReference type="KEGG" id="mma:MM_0038"/>
<dbReference type="PATRIC" id="fig|192952.21.peg.50"/>
<dbReference type="eggNOG" id="arCOG01594">
    <property type="taxonomic scope" value="Archaea"/>
</dbReference>
<dbReference type="HOGENOM" id="CLU_000513_1_3_2"/>
<dbReference type="UniPathway" id="UPA00068">
    <property type="reaction ID" value="UER00171"/>
</dbReference>
<dbReference type="UniPathway" id="UPA00070">
    <property type="reaction ID" value="UER00115"/>
</dbReference>
<dbReference type="Proteomes" id="UP000000595">
    <property type="component" value="Chromosome"/>
</dbReference>
<dbReference type="GO" id="GO:0005737">
    <property type="term" value="C:cytoplasm"/>
    <property type="evidence" value="ECO:0007669"/>
    <property type="project" value="TreeGrafter"/>
</dbReference>
<dbReference type="GO" id="GO:0005524">
    <property type="term" value="F:ATP binding"/>
    <property type="evidence" value="ECO:0007669"/>
    <property type="project" value="UniProtKB-UniRule"/>
</dbReference>
<dbReference type="GO" id="GO:0004087">
    <property type="term" value="F:carbamoyl-phosphate synthase (ammonia) activity"/>
    <property type="evidence" value="ECO:0007669"/>
    <property type="project" value="RHEA"/>
</dbReference>
<dbReference type="GO" id="GO:0004088">
    <property type="term" value="F:carbamoyl-phosphate synthase (glutamine-hydrolyzing) activity"/>
    <property type="evidence" value="ECO:0007669"/>
    <property type="project" value="UniProtKB-UniRule"/>
</dbReference>
<dbReference type="GO" id="GO:0046872">
    <property type="term" value="F:metal ion binding"/>
    <property type="evidence" value="ECO:0007669"/>
    <property type="project" value="UniProtKB-KW"/>
</dbReference>
<dbReference type="GO" id="GO:0044205">
    <property type="term" value="P:'de novo' UMP biosynthetic process"/>
    <property type="evidence" value="ECO:0007669"/>
    <property type="project" value="UniProtKB-UniRule"/>
</dbReference>
<dbReference type="GO" id="GO:0006541">
    <property type="term" value="P:glutamine metabolic process"/>
    <property type="evidence" value="ECO:0007669"/>
    <property type="project" value="TreeGrafter"/>
</dbReference>
<dbReference type="GO" id="GO:0006526">
    <property type="term" value="P:L-arginine biosynthetic process"/>
    <property type="evidence" value="ECO:0007669"/>
    <property type="project" value="UniProtKB-UniRule"/>
</dbReference>
<dbReference type="CDD" id="cd01424">
    <property type="entry name" value="MGS_CPS_II"/>
    <property type="match status" value="1"/>
</dbReference>
<dbReference type="FunFam" id="1.10.1030.10:FF:000002">
    <property type="entry name" value="Carbamoyl-phosphate synthase large chain"/>
    <property type="match status" value="1"/>
</dbReference>
<dbReference type="FunFam" id="3.30.1490.20:FF:000001">
    <property type="entry name" value="Carbamoyl-phosphate synthase large chain"/>
    <property type="match status" value="1"/>
</dbReference>
<dbReference type="FunFam" id="3.30.470.20:FF:000001">
    <property type="entry name" value="Carbamoyl-phosphate synthase large chain"/>
    <property type="match status" value="1"/>
</dbReference>
<dbReference type="FunFam" id="3.30.470.20:FF:000013">
    <property type="entry name" value="Carbamoyl-phosphate synthase large chain"/>
    <property type="match status" value="1"/>
</dbReference>
<dbReference type="FunFam" id="3.40.50.20:FF:000001">
    <property type="entry name" value="Carbamoyl-phosphate synthase large chain"/>
    <property type="match status" value="2"/>
</dbReference>
<dbReference type="Gene3D" id="3.40.50.20">
    <property type="match status" value="2"/>
</dbReference>
<dbReference type="Gene3D" id="3.30.470.20">
    <property type="entry name" value="ATP-grasp fold, B domain"/>
    <property type="match status" value="2"/>
</dbReference>
<dbReference type="Gene3D" id="1.10.1030.10">
    <property type="entry name" value="Carbamoyl-phosphate synthetase, large subunit oligomerisation domain"/>
    <property type="match status" value="1"/>
</dbReference>
<dbReference type="Gene3D" id="3.40.50.1380">
    <property type="entry name" value="Methylglyoxal synthase-like domain"/>
    <property type="match status" value="1"/>
</dbReference>
<dbReference type="HAMAP" id="MF_01210_A">
    <property type="entry name" value="CPSase_L_chain_A"/>
    <property type="match status" value="1"/>
</dbReference>
<dbReference type="HAMAP" id="MF_01210_B">
    <property type="entry name" value="CPSase_L_chain_B"/>
    <property type="match status" value="1"/>
</dbReference>
<dbReference type="InterPro" id="IPR011761">
    <property type="entry name" value="ATP-grasp"/>
</dbReference>
<dbReference type="InterPro" id="IPR006275">
    <property type="entry name" value="CarbamoylP_synth_lsu"/>
</dbReference>
<dbReference type="InterPro" id="IPR005480">
    <property type="entry name" value="CarbamoylP_synth_lsu_oligo"/>
</dbReference>
<dbReference type="InterPro" id="IPR036897">
    <property type="entry name" value="CarbamoylP_synth_lsu_oligo_sf"/>
</dbReference>
<dbReference type="InterPro" id="IPR005479">
    <property type="entry name" value="CbamoylP_synth_lsu-like_ATP-bd"/>
</dbReference>
<dbReference type="InterPro" id="IPR005483">
    <property type="entry name" value="CbamoylP_synth_lsu_CPSase_dom"/>
</dbReference>
<dbReference type="InterPro" id="IPR011607">
    <property type="entry name" value="MGS-like_dom"/>
</dbReference>
<dbReference type="InterPro" id="IPR036914">
    <property type="entry name" value="MGS-like_dom_sf"/>
</dbReference>
<dbReference type="InterPro" id="IPR033937">
    <property type="entry name" value="MGS_CPS_CarB"/>
</dbReference>
<dbReference type="InterPro" id="IPR016185">
    <property type="entry name" value="PreATP-grasp_dom_sf"/>
</dbReference>
<dbReference type="NCBIfam" id="TIGR01369">
    <property type="entry name" value="CPSaseII_lrg"/>
    <property type="match status" value="1"/>
</dbReference>
<dbReference type="NCBIfam" id="NF003671">
    <property type="entry name" value="PRK05294.1"/>
    <property type="match status" value="1"/>
</dbReference>
<dbReference type="NCBIfam" id="NF009455">
    <property type="entry name" value="PRK12815.1"/>
    <property type="match status" value="1"/>
</dbReference>
<dbReference type="PANTHER" id="PTHR11405:SF53">
    <property type="entry name" value="CARBAMOYL-PHOSPHATE SYNTHASE [AMMONIA], MITOCHONDRIAL"/>
    <property type="match status" value="1"/>
</dbReference>
<dbReference type="PANTHER" id="PTHR11405">
    <property type="entry name" value="CARBAMOYLTRANSFERASE FAMILY MEMBER"/>
    <property type="match status" value="1"/>
</dbReference>
<dbReference type="Pfam" id="PF02786">
    <property type="entry name" value="CPSase_L_D2"/>
    <property type="match status" value="2"/>
</dbReference>
<dbReference type="Pfam" id="PF02787">
    <property type="entry name" value="CPSase_L_D3"/>
    <property type="match status" value="1"/>
</dbReference>
<dbReference type="Pfam" id="PF02142">
    <property type="entry name" value="MGS"/>
    <property type="match status" value="1"/>
</dbReference>
<dbReference type="PRINTS" id="PR00098">
    <property type="entry name" value="CPSASE"/>
</dbReference>
<dbReference type="SMART" id="SM01096">
    <property type="entry name" value="CPSase_L_D3"/>
    <property type="match status" value="1"/>
</dbReference>
<dbReference type="SMART" id="SM00851">
    <property type="entry name" value="MGS"/>
    <property type="match status" value="1"/>
</dbReference>
<dbReference type="SUPFAM" id="SSF48108">
    <property type="entry name" value="Carbamoyl phosphate synthetase, large subunit connection domain"/>
    <property type="match status" value="1"/>
</dbReference>
<dbReference type="SUPFAM" id="SSF56059">
    <property type="entry name" value="Glutathione synthetase ATP-binding domain-like"/>
    <property type="match status" value="2"/>
</dbReference>
<dbReference type="SUPFAM" id="SSF52335">
    <property type="entry name" value="Methylglyoxal synthase-like"/>
    <property type="match status" value="1"/>
</dbReference>
<dbReference type="SUPFAM" id="SSF52440">
    <property type="entry name" value="PreATP-grasp domain"/>
    <property type="match status" value="2"/>
</dbReference>
<dbReference type="PROSITE" id="PS50975">
    <property type="entry name" value="ATP_GRASP"/>
    <property type="match status" value="2"/>
</dbReference>
<dbReference type="PROSITE" id="PS00866">
    <property type="entry name" value="CPSASE_1"/>
    <property type="match status" value="1"/>
</dbReference>
<dbReference type="PROSITE" id="PS00867">
    <property type="entry name" value="CPSASE_2"/>
    <property type="match status" value="1"/>
</dbReference>
<dbReference type="PROSITE" id="PS51855">
    <property type="entry name" value="MGS"/>
    <property type="match status" value="1"/>
</dbReference>